<reference key="1">
    <citation type="journal article" date="2007" name="Science">
        <title>Legumes symbioses: absence of nod genes in photosynthetic bradyrhizobia.</title>
        <authorList>
            <person name="Giraud E."/>
            <person name="Moulin L."/>
            <person name="Vallenet D."/>
            <person name="Barbe V."/>
            <person name="Cytryn E."/>
            <person name="Avarre J.-C."/>
            <person name="Jaubert M."/>
            <person name="Simon D."/>
            <person name="Cartieaux F."/>
            <person name="Prin Y."/>
            <person name="Bena G."/>
            <person name="Hannibal L."/>
            <person name="Fardoux J."/>
            <person name="Kojadinovic M."/>
            <person name="Vuillet L."/>
            <person name="Lajus A."/>
            <person name="Cruveiller S."/>
            <person name="Rouy Z."/>
            <person name="Mangenot S."/>
            <person name="Segurens B."/>
            <person name="Dossat C."/>
            <person name="Franck W.L."/>
            <person name="Chang W.-S."/>
            <person name="Saunders E."/>
            <person name="Bruce D."/>
            <person name="Richardson P."/>
            <person name="Normand P."/>
            <person name="Dreyfus B."/>
            <person name="Pignol D."/>
            <person name="Stacey G."/>
            <person name="Emerich D."/>
            <person name="Vermeglio A."/>
            <person name="Medigue C."/>
            <person name="Sadowsky M."/>
        </authorList>
    </citation>
    <scope>NUCLEOTIDE SEQUENCE [LARGE SCALE GENOMIC DNA]</scope>
    <source>
        <strain>ORS 278</strain>
    </source>
</reference>
<evidence type="ECO:0000255" key="1">
    <source>
        <dbReference type="HAMAP-Rule" id="MF_00692"/>
    </source>
</evidence>
<evidence type="ECO:0000256" key="2">
    <source>
        <dbReference type="SAM" id="MobiDB-lite"/>
    </source>
</evidence>
<dbReference type="EC" id="2.7.7.-" evidence="1"/>
<dbReference type="EC" id="2.7.7.108" evidence="1"/>
<dbReference type="EMBL" id="CU234118">
    <property type="protein sequence ID" value="CAL77149.1"/>
    <property type="molecule type" value="Genomic_DNA"/>
</dbReference>
<dbReference type="RefSeq" id="WP_011926304.1">
    <property type="nucleotide sequence ID" value="NC_009445.1"/>
</dbReference>
<dbReference type="SMR" id="A4YTC3"/>
<dbReference type="STRING" id="114615.BRADO3358"/>
<dbReference type="KEGG" id="bra:BRADO3358"/>
<dbReference type="eggNOG" id="COG0397">
    <property type="taxonomic scope" value="Bacteria"/>
</dbReference>
<dbReference type="HOGENOM" id="CLU_010245_4_1_5"/>
<dbReference type="OrthoDB" id="9776281at2"/>
<dbReference type="Proteomes" id="UP000001994">
    <property type="component" value="Chromosome"/>
</dbReference>
<dbReference type="GO" id="GO:0070733">
    <property type="term" value="F:AMPylase activity"/>
    <property type="evidence" value="ECO:0007669"/>
    <property type="project" value="RHEA"/>
</dbReference>
<dbReference type="GO" id="GO:0005524">
    <property type="term" value="F:ATP binding"/>
    <property type="evidence" value="ECO:0007669"/>
    <property type="project" value="UniProtKB-UniRule"/>
</dbReference>
<dbReference type="GO" id="GO:0000287">
    <property type="term" value="F:magnesium ion binding"/>
    <property type="evidence" value="ECO:0007669"/>
    <property type="project" value="UniProtKB-UniRule"/>
</dbReference>
<dbReference type="HAMAP" id="MF_00692">
    <property type="entry name" value="YdiU_SelO"/>
    <property type="match status" value="1"/>
</dbReference>
<dbReference type="InterPro" id="IPR003846">
    <property type="entry name" value="SelO"/>
</dbReference>
<dbReference type="NCBIfam" id="NF000658">
    <property type="entry name" value="PRK00029.1"/>
    <property type="match status" value="1"/>
</dbReference>
<dbReference type="PANTHER" id="PTHR32057">
    <property type="entry name" value="PROTEIN ADENYLYLTRANSFERASE SELO, MITOCHONDRIAL"/>
    <property type="match status" value="1"/>
</dbReference>
<dbReference type="PANTHER" id="PTHR32057:SF14">
    <property type="entry name" value="PROTEIN ADENYLYLTRANSFERASE SELO, MITOCHONDRIAL"/>
    <property type="match status" value="1"/>
</dbReference>
<dbReference type="Pfam" id="PF02696">
    <property type="entry name" value="SelO"/>
    <property type="match status" value="1"/>
</dbReference>
<name>SELO_BRASO</name>
<organism>
    <name type="scientific">Bradyrhizobium sp. (strain ORS 278)</name>
    <dbReference type="NCBI Taxonomy" id="114615"/>
    <lineage>
        <taxon>Bacteria</taxon>
        <taxon>Pseudomonadati</taxon>
        <taxon>Pseudomonadota</taxon>
        <taxon>Alphaproteobacteria</taxon>
        <taxon>Hyphomicrobiales</taxon>
        <taxon>Nitrobacteraceae</taxon>
        <taxon>Bradyrhizobium</taxon>
    </lineage>
</organism>
<keyword id="KW-0067">ATP-binding</keyword>
<keyword id="KW-0460">Magnesium</keyword>
<keyword id="KW-0464">Manganese</keyword>
<keyword id="KW-0479">Metal-binding</keyword>
<keyword id="KW-0547">Nucleotide-binding</keyword>
<keyword id="KW-0548">Nucleotidyltransferase</keyword>
<keyword id="KW-1185">Reference proteome</keyword>
<keyword id="KW-0808">Transferase</keyword>
<gene>
    <name evidence="1" type="primary">ydiU</name>
    <name evidence="1" type="synonym">selO</name>
    <name type="ordered locus">BRADO3358</name>
</gene>
<accession>A4YTC3</accession>
<proteinExistence type="inferred from homology"/>
<feature type="chain" id="PRO_1000045240" description="Protein nucleotidyltransferase YdiU">
    <location>
        <begin position="1"/>
        <end position="491"/>
    </location>
</feature>
<feature type="region of interest" description="Disordered" evidence="2">
    <location>
        <begin position="466"/>
        <end position="491"/>
    </location>
</feature>
<feature type="compositionally biased region" description="Basic and acidic residues" evidence="2">
    <location>
        <begin position="466"/>
        <end position="484"/>
    </location>
</feature>
<feature type="active site" description="Proton acceptor" evidence="1">
    <location>
        <position position="250"/>
    </location>
</feature>
<feature type="binding site" evidence="1">
    <location>
        <position position="88"/>
    </location>
    <ligand>
        <name>ATP</name>
        <dbReference type="ChEBI" id="CHEBI:30616"/>
    </ligand>
</feature>
<feature type="binding site" evidence="1">
    <location>
        <position position="90"/>
    </location>
    <ligand>
        <name>ATP</name>
        <dbReference type="ChEBI" id="CHEBI:30616"/>
    </ligand>
</feature>
<feature type="binding site" evidence="1">
    <location>
        <position position="91"/>
    </location>
    <ligand>
        <name>ATP</name>
        <dbReference type="ChEBI" id="CHEBI:30616"/>
    </ligand>
</feature>
<feature type="binding site" evidence="1">
    <location>
        <position position="111"/>
    </location>
    <ligand>
        <name>ATP</name>
        <dbReference type="ChEBI" id="CHEBI:30616"/>
    </ligand>
</feature>
<feature type="binding site" evidence="1">
    <location>
        <position position="123"/>
    </location>
    <ligand>
        <name>ATP</name>
        <dbReference type="ChEBI" id="CHEBI:30616"/>
    </ligand>
</feature>
<feature type="binding site" evidence="1">
    <location>
        <position position="124"/>
    </location>
    <ligand>
        <name>ATP</name>
        <dbReference type="ChEBI" id="CHEBI:30616"/>
    </ligand>
</feature>
<feature type="binding site" evidence="1">
    <location>
        <position position="174"/>
    </location>
    <ligand>
        <name>ATP</name>
        <dbReference type="ChEBI" id="CHEBI:30616"/>
    </ligand>
</feature>
<feature type="binding site" evidence="1">
    <location>
        <position position="181"/>
    </location>
    <ligand>
        <name>ATP</name>
        <dbReference type="ChEBI" id="CHEBI:30616"/>
    </ligand>
</feature>
<feature type="binding site" evidence="1">
    <location>
        <position position="251"/>
    </location>
    <ligand>
        <name>Mg(2+)</name>
        <dbReference type="ChEBI" id="CHEBI:18420"/>
    </ligand>
</feature>
<feature type="binding site" evidence="1">
    <location>
        <position position="260"/>
    </location>
    <ligand>
        <name>ATP</name>
        <dbReference type="ChEBI" id="CHEBI:30616"/>
    </ligand>
</feature>
<feature type="binding site" evidence="1">
    <location>
        <position position="260"/>
    </location>
    <ligand>
        <name>Mg(2+)</name>
        <dbReference type="ChEBI" id="CHEBI:18420"/>
    </ligand>
</feature>
<sequence length="491" mass="53804">MTVHFPFQNSYVALPDNFFARVAPTPVAAPRLIKLNRPLAEELGLNPAELETPEGAEILAGKTVPEGAEPIAMAYAGHQFGHFVPQLGDGRAVLLGEVVDRNGVRRDIQLKGSGPTPFSRRGDGRAALGPVLREYIVSEAMAALGIPTTRSLAAVVTGEQVYRGTALPGAVLTRVATSHIRVGTFQYFAARQDVEAVRRLADHVIGRHYPDLAGTERPYHALLAAVISRQAKLIADWLLVGFIHGVMNTDNTSVSGETIDYGPCAFMDAYDPKQVFSSIDEFGRYAFANQPRIAMWNLTRLAECLLPLFGDDKDQAIKEAETALDGFAAQFTEAHQAGLRRKLGLFTQRDGDQPLAQALFDAMALAKADFTLTFRRLSDAAGSGDLSVVRALFEDPTGFDEWAARWQQRLAVEPQTPAERRAAMRKVNPAFIPRNHRIEAVITAAVENDDYAPFEELHAVLAKPYDDQPDRADYAEPPQPEERVLQTFCGT</sequence>
<protein>
    <recommendedName>
        <fullName evidence="1">Protein nucleotidyltransferase YdiU</fullName>
        <ecNumber evidence="1">2.7.7.-</ecNumber>
    </recommendedName>
    <alternativeName>
        <fullName evidence="1">Protein adenylyltransferase YdiU</fullName>
        <ecNumber evidence="1">2.7.7.108</ecNumber>
    </alternativeName>
    <alternativeName>
        <fullName evidence="1">Protein uridylyltransferase YdiU</fullName>
        <ecNumber evidence="1">2.7.7.-</ecNumber>
    </alternativeName>
</protein>
<comment type="function">
    <text evidence="1">Nucleotidyltransferase involved in the post-translational modification of proteins. It can catalyze the addition of adenosine monophosphate (AMP) or uridine monophosphate (UMP) to a protein, resulting in modifications known as AMPylation and UMPylation.</text>
</comment>
<comment type="catalytic activity">
    <reaction evidence="1">
        <text>L-seryl-[protein] + ATP = 3-O-(5'-adenylyl)-L-seryl-[protein] + diphosphate</text>
        <dbReference type="Rhea" id="RHEA:58120"/>
        <dbReference type="Rhea" id="RHEA-COMP:9863"/>
        <dbReference type="Rhea" id="RHEA-COMP:15073"/>
        <dbReference type="ChEBI" id="CHEBI:29999"/>
        <dbReference type="ChEBI" id="CHEBI:30616"/>
        <dbReference type="ChEBI" id="CHEBI:33019"/>
        <dbReference type="ChEBI" id="CHEBI:142516"/>
        <dbReference type="EC" id="2.7.7.108"/>
    </reaction>
</comment>
<comment type="catalytic activity">
    <reaction evidence="1">
        <text>L-threonyl-[protein] + ATP = 3-O-(5'-adenylyl)-L-threonyl-[protein] + diphosphate</text>
        <dbReference type="Rhea" id="RHEA:54292"/>
        <dbReference type="Rhea" id="RHEA-COMP:11060"/>
        <dbReference type="Rhea" id="RHEA-COMP:13847"/>
        <dbReference type="ChEBI" id="CHEBI:30013"/>
        <dbReference type="ChEBI" id="CHEBI:30616"/>
        <dbReference type="ChEBI" id="CHEBI:33019"/>
        <dbReference type="ChEBI" id="CHEBI:138113"/>
        <dbReference type="EC" id="2.7.7.108"/>
    </reaction>
</comment>
<comment type="catalytic activity">
    <reaction evidence="1">
        <text>L-tyrosyl-[protein] + ATP = O-(5'-adenylyl)-L-tyrosyl-[protein] + diphosphate</text>
        <dbReference type="Rhea" id="RHEA:54288"/>
        <dbReference type="Rhea" id="RHEA-COMP:10136"/>
        <dbReference type="Rhea" id="RHEA-COMP:13846"/>
        <dbReference type="ChEBI" id="CHEBI:30616"/>
        <dbReference type="ChEBI" id="CHEBI:33019"/>
        <dbReference type="ChEBI" id="CHEBI:46858"/>
        <dbReference type="ChEBI" id="CHEBI:83624"/>
        <dbReference type="EC" id="2.7.7.108"/>
    </reaction>
</comment>
<comment type="catalytic activity">
    <reaction evidence="1">
        <text>L-histidyl-[protein] + UTP = N(tele)-(5'-uridylyl)-L-histidyl-[protein] + diphosphate</text>
        <dbReference type="Rhea" id="RHEA:83891"/>
        <dbReference type="Rhea" id="RHEA-COMP:9745"/>
        <dbReference type="Rhea" id="RHEA-COMP:20239"/>
        <dbReference type="ChEBI" id="CHEBI:29979"/>
        <dbReference type="ChEBI" id="CHEBI:33019"/>
        <dbReference type="ChEBI" id="CHEBI:46398"/>
        <dbReference type="ChEBI" id="CHEBI:233474"/>
    </reaction>
</comment>
<comment type="catalytic activity">
    <reaction evidence="1">
        <text>L-seryl-[protein] + UTP = O-(5'-uridylyl)-L-seryl-[protein] + diphosphate</text>
        <dbReference type="Rhea" id="RHEA:64604"/>
        <dbReference type="Rhea" id="RHEA-COMP:9863"/>
        <dbReference type="Rhea" id="RHEA-COMP:16635"/>
        <dbReference type="ChEBI" id="CHEBI:29999"/>
        <dbReference type="ChEBI" id="CHEBI:33019"/>
        <dbReference type="ChEBI" id="CHEBI:46398"/>
        <dbReference type="ChEBI" id="CHEBI:156051"/>
    </reaction>
</comment>
<comment type="catalytic activity">
    <reaction evidence="1">
        <text>L-tyrosyl-[protein] + UTP = O-(5'-uridylyl)-L-tyrosyl-[protein] + diphosphate</text>
        <dbReference type="Rhea" id="RHEA:83887"/>
        <dbReference type="Rhea" id="RHEA-COMP:10136"/>
        <dbReference type="Rhea" id="RHEA-COMP:20238"/>
        <dbReference type="ChEBI" id="CHEBI:33019"/>
        <dbReference type="ChEBI" id="CHEBI:46398"/>
        <dbReference type="ChEBI" id="CHEBI:46858"/>
        <dbReference type="ChEBI" id="CHEBI:90602"/>
    </reaction>
</comment>
<comment type="cofactor">
    <cofactor evidence="1">
        <name>Mg(2+)</name>
        <dbReference type="ChEBI" id="CHEBI:18420"/>
    </cofactor>
    <cofactor evidence="1">
        <name>Mn(2+)</name>
        <dbReference type="ChEBI" id="CHEBI:29035"/>
    </cofactor>
</comment>
<comment type="similarity">
    <text evidence="1">Belongs to the SELO family.</text>
</comment>